<organism>
    <name type="scientific">Shewanella oneidensis (strain ATCC 700550 / JCM 31522 / CIP 106686 / LMG 19005 / NCIMB 14063 / MR-1)</name>
    <dbReference type="NCBI Taxonomy" id="211586"/>
    <lineage>
        <taxon>Bacteria</taxon>
        <taxon>Pseudomonadati</taxon>
        <taxon>Pseudomonadota</taxon>
        <taxon>Gammaproteobacteria</taxon>
        <taxon>Alteromonadales</taxon>
        <taxon>Shewanellaceae</taxon>
        <taxon>Shewanella</taxon>
    </lineage>
</organism>
<gene>
    <name evidence="1" type="primary">ruvC</name>
    <name type="ordered locus">SO_2431</name>
</gene>
<keyword id="KW-0963">Cytoplasm</keyword>
<keyword id="KW-0227">DNA damage</keyword>
<keyword id="KW-0233">DNA recombination</keyword>
<keyword id="KW-0234">DNA repair</keyword>
<keyword id="KW-0238">DNA-binding</keyword>
<keyword id="KW-0255">Endonuclease</keyword>
<keyword id="KW-0378">Hydrolase</keyword>
<keyword id="KW-0460">Magnesium</keyword>
<keyword id="KW-0479">Metal-binding</keyword>
<keyword id="KW-0540">Nuclease</keyword>
<keyword id="KW-1185">Reference proteome</keyword>
<comment type="function">
    <text evidence="1">The RuvA-RuvB-RuvC complex processes Holliday junction (HJ) DNA during genetic recombination and DNA repair. Endonuclease that resolves HJ intermediates. Cleaves cruciform DNA by making single-stranded nicks across the HJ at symmetrical positions within the homologous arms, yielding a 5'-phosphate and a 3'-hydroxyl group; requires a central core of homology in the junction. The consensus cleavage sequence is 5'-(A/T)TT(C/G)-3'. Cleavage occurs on the 3'-side of the TT dinucleotide at the point of strand exchange. HJ branch migration catalyzed by RuvA-RuvB allows RuvC to scan DNA until it finds its consensus sequence, where it cleaves and resolves the cruciform DNA.</text>
</comment>
<comment type="catalytic activity">
    <reaction evidence="1">
        <text>Endonucleolytic cleavage at a junction such as a reciprocal single-stranded crossover between two homologous DNA duplexes (Holliday junction).</text>
        <dbReference type="EC" id="3.1.21.10"/>
    </reaction>
</comment>
<comment type="cofactor">
    <cofactor evidence="1">
        <name>Mg(2+)</name>
        <dbReference type="ChEBI" id="CHEBI:18420"/>
    </cofactor>
    <text evidence="1">Binds 2 Mg(2+) ion per subunit.</text>
</comment>
<comment type="subunit">
    <text evidence="1">Homodimer which binds Holliday junction (HJ) DNA. The HJ becomes 2-fold symmetrical on binding to RuvC with unstacked arms; it has a different conformation from HJ DNA in complex with RuvA. In the full resolvosome a probable DNA-RuvA(4)-RuvB(12)-RuvC(2) complex forms which resolves the HJ.</text>
</comment>
<comment type="subcellular location">
    <subcellularLocation>
        <location evidence="1">Cytoplasm</location>
    </subcellularLocation>
</comment>
<comment type="similarity">
    <text evidence="1">Belongs to the RuvC family.</text>
</comment>
<dbReference type="EC" id="3.1.21.10" evidence="1"/>
<dbReference type="EMBL" id="AE014299">
    <property type="protein sequence ID" value="AAN55465.1"/>
    <property type="molecule type" value="Genomic_DNA"/>
</dbReference>
<dbReference type="RefSeq" id="NP_718021.1">
    <property type="nucleotide sequence ID" value="NC_004347.2"/>
</dbReference>
<dbReference type="RefSeq" id="WP_011072406.1">
    <property type="nucleotide sequence ID" value="NZ_CP053946.1"/>
</dbReference>
<dbReference type="SMR" id="Q8EEF1"/>
<dbReference type="STRING" id="211586.SO_2431"/>
<dbReference type="PaxDb" id="211586-SO_2431"/>
<dbReference type="KEGG" id="son:SO_2431"/>
<dbReference type="PATRIC" id="fig|1028802.3.peg.1122"/>
<dbReference type="eggNOG" id="COG0817">
    <property type="taxonomic scope" value="Bacteria"/>
</dbReference>
<dbReference type="HOGENOM" id="CLU_091257_2_1_6"/>
<dbReference type="OrthoDB" id="9805499at2"/>
<dbReference type="PhylomeDB" id="Q8EEF1"/>
<dbReference type="BioCyc" id="SONE211586:G1GMP-2221-MONOMER"/>
<dbReference type="Proteomes" id="UP000008186">
    <property type="component" value="Chromosome"/>
</dbReference>
<dbReference type="GO" id="GO:0005737">
    <property type="term" value="C:cytoplasm"/>
    <property type="evidence" value="ECO:0007669"/>
    <property type="project" value="UniProtKB-SubCell"/>
</dbReference>
<dbReference type="GO" id="GO:0048476">
    <property type="term" value="C:Holliday junction resolvase complex"/>
    <property type="evidence" value="ECO:0007669"/>
    <property type="project" value="UniProtKB-UniRule"/>
</dbReference>
<dbReference type="GO" id="GO:0008821">
    <property type="term" value="F:crossover junction DNA endonuclease activity"/>
    <property type="evidence" value="ECO:0007669"/>
    <property type="project" value="UniProtKB-UniRule"/>
</dbReference>
<dbReference type="GO" id="GO:0003677">
    <property type="term" value="F:DNA binding"/>
    <property type="evidence" value="ECO:0007669"/>
    <property type="project" value="UniProtKB-KW"/>
</dbReference>
<dbReference type="GO" id="GO:0000287">
    <property type="term" value="F:magnesium ion binding"/>
    <property type="evidence" value="ECO:0007669"/>
    <property type="project" value="UniProtKB-UniRule"/>
</dbReference>
<dbReference type="GO" id="GO:0006310">
    <property type="term" value="P:DNA recombination"/>
    <property type="evidence" value="ECO:0007669"/>
    <property type="project" value="UniProtKB-UniRule"/>
</dbReference>
<dbReference type="GO" id="GO:0006281">
    <property type="term" value="P:DNA repair"/>
    <property type="evidence" value="ECO:0007669"/>
    <property type="project" value="UniProtKB-UniRule"/>
</dbReference>
<dbReference type="CDD" id="cd16962">
    <property type="entry name" value="RuvC"/>
    <property type="match status" value="1"/>
</dbReference>
<dbReference type="FunFam" id="3.30.420.10:FF:000002">
    <property type="entry name" value="Crossover junction endodeoxyribonuclease RuvC"/>
    <property type="match status" value="1"/>
</dbReference>
<dbReference type="Gene3D" id="3.30.420.10">
    <property type="entry name" value="Ribonuclease H-like superfamily/Ribonuclease H"/>
    <property type="match status" value="1"/>
</dbReference>
<dbReference type="HAMAP" id="MF_00034">
    <property type="entry name" value="RuvC"/>
    <property type="match status" value="1"/>
</dbReference>
<dbReference type="InterPro" id="IPR012337">
    <property type="entry name" value="RNaseH-like_sf"/>
</dbReference>
<dbReference type="InterPro" id="IPR036397">
    <property type="entry name" value="RNaseH_sf"/>
</dbReference>
<dbReference type="InterPro" id="IPR020563">
    <property type="entry name" value="X-over_junc_endoDNase_Mg_BS"/>
</dbReference>
<dbReference type="InterPro" id="IPR002176">
    <property type="entry name" value="X-over_junc_endoDNase_RuvC"/>
</dbReference>
<dbReference type="NCBIfam" id="TIGR00228">
    <property type="entry name" value="ruvC"/>
    <property type="match status" value="1"/>
</dbReference>
<dbReference type="PANTHER" id="PTHR30194">
    <property type="entry name" value="CROSSOVER JUNCTION ENDODEOXYRIBONUCLEASE RUVC"/>
    <property type="match status" value="1"/>
</dbReference>
<dbReference type="PANTHER" id="PTHR30194:SF3">
    <property type="entry name" value="CROSSOVER JUNCTION ENDODEOXYRIBONUCLEASE RUVC"/>
    <property type="match status" value="1"/>
</dbReference>
<dbReference type="Pfam" id="PF02075">
    <property type="entry name" value="RuvC"/>
    <property type="match status" value="1"/>
</dbReference>
<dbReference type="PRINTS" id="PR00696">
    <property type="entry name" value="RSOLVASERUVC"/>
</dbReference>
<dbReference type="SUPFAM" id="SSF53098">
    <property type="entry name" value="Ribonuclease H-like"/>
    <property type="match status" value="1"/>
</dbReference>
<dbReference type="PROSITE" id="PS01321">
    <property type="entry name" value="RUVC"/>
    <property type="match status" value="1"/>
</dbReference>
<accession>Q8EEF1</accession>
<protein>
    <recommendedName>
        <fullName evidence="1">Crossover junction endodeoxyribonuclease RuvC</fullName>
        <ecNumber evidence="1">3.1.21.10</ecNumber>
    </recommendedName>
    <alternativeName>
        <fullName evidence="1">Holliday junction nuclease RuvC</fullName>
    </alternativeName>
    <alternativeName>
        <fullName evidence="1">Holliday junction resolvase RuvC</fullName>
    </alternativeName>
</protein>
<sequence>MAIILGVDPGSRITGYGVIQCQGRQQLYLGSGCIRTSGDDLPLKLKQIFDGISEIIRQYQPDEFAIERVFLAKNADSALKLGQARGAAIVAATVANLPVAEYSATQIKSAVVGTGRAKKEQVQHMIQQLLKLPAAPQADAADALGVAVCHYHTNQSLVALSGRATTRTYGRYR</sequence>
<evidence type="ECO:0000255" key="1">
    <source>
        <dbReference type="HAMAP-Rule" id="MF_00034"/>
    </source>
</evidence>
<proteinExistence type="inferred from homology"/>
<name>RUVC_SHEON</name>
<feature type="chain" id="PRO_0000183132" description="Crossover junction endodeoxyribonuclease RuvC">
    <location>
        <begin position="1"/>
        <end position="173"/>
    </location>
</feature>
<feature type="active site" evidence="1">
    <location>
        <position position="8"/>
    </location>
</feature>
<feature type="active site" evidence="1">
    <location>
        <position position="67"/>
    </location>
</feature>
<feature type="active site" evidence="1">
    <location>
        <position position="139"/>
    </location>
</feature>
<feature type="binding site" evidence="1">
    <location>
        <position position="8"/>
    </location>
    <ligand>
        <name>Mg(2+)</name>
        <dbReference type="ChEBI" id="CHEBI:18420"/>
        <label>1</label>
    </ligand>
</feature>
<feature type="binding site" evidence="1">
    <location>
        <position position="67"/>
    </location>
    <ligand>
        <name>Mg(2+)</name>
        <dbReference type="ChEBI" id="CHEBI:18420"/>
        <label>2</label>
    </ligand>
</feature>
<feature type="binding site" evidence="1">
    <location>
        <position position="139"/>
    </location>
    <ligand>
        <name>Mg(2+)</name>
        <dbReference type="ChEBI" id="CHEBI:18420"/>
        <label>1</label>
    </ligand>
</feature>
<reference key="1">
    <citation type="journal article" date="2002" name="Nat. Biotechnol.">
        <title>Genome sequence of the dissimilatory metal ion-reducing bacterium Shewanella oneidensis.</title>
        <authorList>
            <person name="Heidelberg J.F."/>
            <person name="Paulsen I.T."/>
            <person name="Nelson K.E."/>
            <person name="Gaidos E.J."/>
            <person name="Nelson W.C."/>
            <person name="Read T.D."/>
            <person name="Eisen J.A."/>
            <person name="Seshadri R."/>
            <person name="Ward N.L."/>
            <person name="Methe B.A."/>
            <person name="Clayton R.A."/>
            <person name="Meyer T."/>
            <person name="Tsapin A."/>
            <person name="Scott J."/>
            <person name="Beanan M.J."/>
            <person name="Brinkac L.M."/>
            <person name="Daugherty S.C."/>
            <person name="DeBoy R.T."/>
            <person name="Dodson R.J."/>
            <person name="Durkin A.S."/>
            <person name="Haft D.H."/>
            <person name="Kolonay J.F."/>
            <person name="Madupu R."/>
            <person name="Peterson J.D."/>
            <person name="Umayam L.A."/>
            <person name="White O."/>
            <person name="Wolf A.M."/>
            <person name="Vamathevan J.J."/>
            <person name="Weidman J.F."/>
            <person name="Impraim M."/>
            <person name="Lee K."/>
            <person name="Berry K.J."/>
            <person name="Lee C."/>
            <person name="Mueller J."/>
            <person name="Khouri H.M."/>
            <person name="Gill J."/>
            <person name="Utterback T.R."/>
            <person name="McDonald L.A."/>
            <person name="Feldblyum T.V."/>
            <person name="Smith H.O."/>
            <person name="Venter J.C."/>
            <person name="Nealson K.H."/>
            <person name="Fraser C.M."/>
        </authorList>
    </citation>
    <scope>NUCLEOTIDE SEQUENCE [LARGE SCALE GENOMIC DNA]</scope>
    <source>
        <strain>ATCC 700550 / JCM 31522 / CIP 106686 / LMG 19005 / NCIMB 14063 / MR-1</strain>
    </source>
</reference>